<comment type="function">
    <text evidence="1">Excises uracil residues from the DNA which can arise as a result of misincorporation of dUMP residues by DNA polymerase or deamination of cytosines. Therefore may reduce deleterious uracil incorporation into the viral genome, particularly in terminally differentiated cells which lack DNA repair enzymes.</text>
</comment>
<comment type="catalytic activity">
    <reaction evidence="1">
        <text>Hydrolyzes single-stranded DNA or mismatched double-stranded DNA and polynucleotides, releasing free uracil.</text>
        <dbReference type="EC" id="3.2.2.27"/>
    </reaction>
</comment>
<comment type="subcellular location">
    <subcellularLocation>
        <location evidence="1">Host nucleus</location>
    </subcellularLocation>
</comment>
<comment type="similarity">
    <text evidence="1">Belongs to the uracil-DNA glycosylase (UDG) superfamily. UNG family.</text>
</comment>
<gene>
    <name type="primary">U81</name>
    <name type="synonym">EDLF4</name>
</gene>
<dbReference type="EC" id="3.2.2.27" evidence="1"/>
<dbReference type="EMBL" id="U13194">
    <property type="protein sequence ID" value="AAA68472.1"/>
    <property type="molecule type" value="Genomic_DNA"/>
</dbReference>
<dbReference type="EMBL" id="X83413">
    <property type="protein sequence ID" value="CAA58330.1"/>
    <property type="molecule type" value="Genomic_DNA"/>
</dbReference>
<dbReference type="RefSeq" id="NP_042974.1">
    <property type="nucleotide sequence ID" value="NC_001664.2"/>
</dbReference>
<dbReference type="SMR" id="P52345"/>
<dbReference type="DNASU" id="1487961"/>
<dbReference type="GeneID" id="1487961"/>
<dbReference type="KEGG" id="vg:1487961"/>
<dbReference type="Proteomes" id="UP000009295">
    <property type="component" value="Segment"/>
</dbReference>
<dbReference type="GO" id="GO:0042025">
    <property type="term" value="C:host cell nucleus"/>
    <property type="evidence" value="ECO:0007669"/>
    <property type="project" value="UniProtKB-SubCell"/>
</dbReference>
<dbReference type="GO" id="GO:0004844">
    <property type="term" value="F:uracil DNA N-glycosylase activity"/>
    <property type="evidence" value="ECO:0007669"/>
    <property type="project" value="UniProtKB-EC"/>
</dbReference>
<dbReference type="GO" id="GO:0097510">
    <property type="term" value="P:base-excision repair, AP site formation via deaminated base removal"/>
    <property type="evidence" value="ECO:0007669"/>
    <property type="project" value="TreeGrafter"/>
</dbReference>
<dbReference type="CDD" id="cd10027">
    <property type="entry name" value="UDG-F1-like"/>
    <property type="match status" value="1"/>
</dbReference>
<dbReference type="Gene3D" id="3.40.470.10">
    <property type="entry name" value="Uracil-DNA glycosylase-like domain"/>
    <property type="match status" value="1"/>
</dbReference>
<dbReference type="HAMAP" id="MF_00148">
    <property type="entry name" value="UDG"/>
    <property type="match status" value="1"/>
</dbReference>
<dbReference type="InterPro" id="IPR002043">
    <property type="entry name" value="UDG_fam1"/>
</dbReference>
<dbReference type="InterPro" id="IPR018085">
    <property type="entry name" value="Ura-DNA_Glyclase_AS"/>
</dbReference>
<dbReference type="InterPro" id="IPR005122">
    <property type="entry name" value="Uracil-DNA_glycosylase-like"/>
</dbReference>
<dbReference type="InterPro" id="IPR036895">
    <property type="entry name" value="Uracil-DNA_glycosylase-like_sf"/>
</dbReference>
<dbReference type="NCBIfam" id="NF003588">
    <property type="entry name" value="PRK05254.1-1"/>
    <property type="match status" value="1"/>
</dbReference>
<dbReference type="NCBIfam" id="NF003592">
    <property type="entry name" value="PRK05254.1-5"/>
    <property type="match status" value="1"/>
</dbReference>
<dbReference type="NCBIfam" id="TIGR00628">
    <property type="entry name" value="ung"/>
    <property type="match status" value="1"/>
</dbReference>
<dbReference type="PANTHER" id="PTHR11264">
    <property type="entry name" value="URACIL-DNA GLYCOSYLASE"/>
    <property type="match status" value="1"/>
</dbReference>
<dbReference type="PANTHER" id="PTHR11264:SF0">
    <property type="entry name" value="URACIL-DNA GLYCOSYLASE"/>
    <property type="match status" value="1"/>
</dbReference>
<dbReference type="Pfam" id="PF03167">
    <property type="entry name" value="UDG"/>
    <property type="match status" value="1"/>
</dbReference>
<dbReference type="SMART" id="SM00986">
    <property type="entry name" value="UDG"/>
    <property type="match status" value="1"/>
</dbReference>
<dbReference type="SMART" id="SM00987">
    <property type="entry name" value="UreE_C"/>
    <property type="match status" value="1"/>
</dbReference>
<dbReference type="SUPFAM" id="SSF52141">
    <property type="entry name" value="Uracil-DNA glycosylase-like"/>
    <property type="match status" value="1"/>
</dbReference>
<dbReference type="PROSITE" id="PS00130">
    <property type="entry name" value="U_DNA_GLYCOSYLASE"/>
    <property type="match status" value="1"/>
</dbReference>
<reference key="1">
    <citation type="journal article" date="1994" name="Virology">
        <title>Nucleotide sequence analysis of a 21-kbp region of the genome of human herpesvirus-6 containing homologues of human cytomegalovirus major immediate-early and replication genes.</title>
        <authorList>
            <person name="Nicholas J."/>
        </authorList>
    </citation>
    <scope>NUCLEOTIDE SEQUENCE [GENOMIC DNA]</scope>
</reference>
<reference key="2">
    <citation type="journal article" date="1995" name="Virology">
        <title>The DNA sequence of human herpesvirus-6: structure, coding content, and genome evolution.</title>
        <authorList>
            <person name="Gompels U.A."/>
            <person name="Nicholas J."/>
            <person name="Lawrence G.L."/>
            <person name="Jones M."/>
            <person name="Thomson B.J."/>
            <person name="Martin M.E.D."/>
            <person name="Efstathiou S."/>
            <person name="Craxton M.A."/>
            <person name="Macaulay H.A."/>
        </authorList>
    </citation>
    <scope>NUCLEOTIDE SEQUENCE [LARGE SCALE GENOMIC DNA]</scope>
</reference>
<proteinExistence type="inferred from homology"/>
<protein>
    <recommendedName>
        <fullName evidence="1">Uracil-DNA glycosylase</fullName>
        <shortName evidence="1">UDG</shortName>
        <ecNumber evidence="1">3.2.2.27</ecNumber>
    </recommendedName>
    <alternativeName>
        <fullName evidence="1">UNG</fullName>
    </alternativeName>
</protein>
<evidence type="ECO:0000255" key="1">
    <source>
        <dbReference type="HAMAP-Rule" id="MF_04046"/>
    </source>
</evidence>
<keyword id="KW-0227">DNA damage</keyword>
<keyword id="KW-0234">DNA repair</keyword>
<keyword id="KW-1048">Host nucleus</keyword>
<keyword id="KW-0378">Hydrolase</keyword>
<keyword id="KW-1185">Reference proteome</keyword>
<organism>
    <name type="scientific">Human herpesvirus 6A (strain Uganda-1102)</name>
    <name type="common">HHV-6 variant A</name>
    <name type="synonym">Human B lymphotropic virus</name>
    <dbReference type="NCBI Taxonomy" id="10370"/>
    <lineage>
        <taxon>Viruses</taxon>
        <taxon>Duplodnaviria</taxon>
        <taxon>Heunggongvirae</taxon>
        <taxon>Peploviricota</taxon>
        <taxon>Herviviricetes</taxon>
        <taxon>Herpesvirales</taxon>
        <taxon>Orthoherpesviridae</taxon>
        <taxon>Betaherpesvirinae</taxon>
        <taxon>Roseolovirus</taxon>
        <taxon>Roseolovirus humanbeta6a</taxon>
        <taxon>Human betaherpesvirus 6A</taxon>
    </lineage>
</organism>
<sequence length="255" mass="29038">MALLQWMLDHVQDEEKNCENLSIDDQHSLFGINRDWLSFLQLSKLEITHLKHVYKLVDNDRAHLMVHPSSDNVHAWSFLCKPDNVKVVILGQDPYPDGRGCGLAFGTVKECSIPESLKNIFKELERSVPNFSPPDNGCLNSWCSEGVLLLNSIFTVVHGLPMSHEAFGWQTLSYKIISKLSVEMDSLVFLLWGNHARKLSYLIDARKHLVLESAHPSPKVKSARMPFIGCNHFVRANLFLTEHGKDPINWNILNE</sequence>
<organismHost>
    <name type="scientific">Homo sapiens</name>
    <name type="common">Human</name>
    <dbReference type="NCBI Taxonomy" id="9606"/>
</organismHost>
<name>UNG_HHV6U</name>
<feature type="chain" id="PRO_0000176188" description="Uracil-DNA glycosylase">
    <location>
        <begin position="1"/>
        <end position="255"/>
    </location>
</feature>
<feature type="active site" description="Proton acceptor" evidence="1">
    <location>
        <position position="93"/>
    </location>
</feature>
<accession>P52345</accession>